<reference key="1">
    <citation type="journal article" date="2005" name="Proc. Natl. Acad. Sci. U.S.A.">
        <title>Comparison of the complete genome sequences of Pseudomonas syringae pv. syringae B728a and pv. tomato DC3000.</title>
        <authorList>
            <person name="Feil H."/>
            <person name="Feil W.S."/>
            <person name="Chain P."/>
            <person name="Larimer F."/>
            <person name="Dibartolo G."/>
            <person name="Copeland A."/>
            <person name="Lykidis A."/>
            <person name="Trong S."/>
            <person name="Nolan M."/>
            <person name="Goltsman E."/>
            <person name="Thiel J."/>
            <person name="Malfatti S."/>
            <person name="Loper J.E."/>
            <person name="Lapidus A."/>
            <person name="Detter J.C."/>
            <person name="Land M."/>
            <person name="Richardson P.M."/>
            <person name="Kyrpides N.C."/>
            <person name="Ivanova N."/>
            <person name="Lindow S.E."/>
        </authorList>
    </citation>
    <scope>NUCLEOTIDE SEQUENCE [LARGE SCALE GENOMIC DNA]</scope>
    <source>
        <strain>B728a</strain>
    </source>
</reference>
<gene>
    <name evidence="1" type="primary">hisF</name>
    <name type="ordered locus">Psyr_4893</name>
</gene>
<name>HIS6_PSEU2</name>
<feature type="chain" id="PRO_0000142211" description="Imidazole glycerol phosphate synthase subunit HisF">
    <location>
        <begin position="1"/>
        <end position="256"/>
    </location>
</feature>
<feature type="active site" evidence="1">
    <location>
        <position position="12"/>
    </location>
</feature>
<feature type="active site" evidence="1">
    <location>
        <position position="131"/>
    </location>
</feature>
<comment type="function">
    <text evidence="1">IGPS catalyzes the conversion of PRFAR and glutamine to IGP, AICAR and glutamate. The HisF subunit catalyzes the cyclization activity that produces IGP and AICAR from PRFAR using the ammonia provided by the HisH subunit.</text>
</comment>
<comment type="catalytic activity">
    <reaction evidence="1">
        <text>5-[(5-phospho-1-deoxy-D-ribulos-1-ylimino)methylamino]-1-(5-phospho-beta-D-ribosyl)imidazole-4-carboxamide + L-glutamine = D-erythro-1-(imidazol-4-yl)glycerol 3-phosphate + 5-amino-1-(5-phospho-beta-D-ribosyl)imidazole-4-carboxamide + L-glutamate + H(+)</text>
        <dbReference type="Rhea" id="RHEA:24793"/>
        <dbReference type="ChEBI" id="CHEBI:15378"/>
        <dbReference type="ChEBI" id="CHEBI:29985"/>
        <dbReference type="ChEBI" id="CHEBI:58278"/>
        <dbReference type="ChEBI" id="CHEBI:58359"/>
        <dbReference type="ChEBI" id="CHEBI:58475"/>
        <dbReference type="ChEBI" id="CHEBI:58525"/>
        <dbReference type="EC" id="4.3.2.10"/>
    </reaction>
</comment>
<comment type="pathway">
    <text evidence="1">Amino-acid biosynthesis; L-histidine biosynthesis; L-histidine from 5-phospho-alpha-D-ribose 1-diphosphate: step 5/9.</text>
</comment>
<comment type="subunit">
    <text evidence="1">Heterodimer of HisH and HisF.</text>
</comment>
<comment type="subcellular location">
    <subcellularLocation>
        <location evidence="1">Cytoplasm</location>
    </subcellularLocation>
</comment>
<comment type="similarity">
    <text evidence="1">Belongs to the HisA/HisF family.</text>
</comment>
<protein>
    <recommendedName>
        <fullName evidence="1">Imidazole glycerol phosphate synthase subunit HisF</fullName>
        <ecNumber evidence="1">4.3.2.10</ecNumber>
    </recommendedName>
    <alternativeName>
        <fullName evidence="1">IGP synthase cyclase subunit</fullName>
    </alternativeName>
    <alternativeName>
        <fullName evidence="1">IGP synthase subunit HisF</fullName>
    </alternativeName>
    <alternativeName>
        <fullName evidence="1">ImGP synthase subunit HisF</fullName>
        <shortName evidence="1">IGPS subunit HisF</shortName>
    </alternativeName>
</protein>
<sequence length="256" mass="27102">MALAKRIIPCLDVDNGRVVKGVKFENIRDAGDPVEIARRYDEQGADEITFLDITASVDGRDTTLHTVERMASQVFIPLTVGGGVRTVQDIRNLLNAGADKVSINTAAVFNPEFVGEAAARFGSQCIVVAIDAKKVSGPGETPRWEIFTHGGRKPTGLDAVLWAKKMEDLGAGEILLTSMDQDGMKNGFDLGVTRAISDALGIPVIASGGVGNLEHLAAGVIEGHASAVLAASIFHFGEYTVPEAKAYMASRGIVVR</sequence>
<keyword id="KW-0028">Amino-acid biosynthesis</keyword>
<keyword id="KW-0963">Cytoplasm</keyword>
<keyword id="KW-0368">Histidine biosynthesis</keyword>
<keyword id="KW-0456">Lyase</keyword>
<dbReference type="EC" id="4.3.2.10" evidence="1"/>
<dbReference type="EMBL" id="CP000075">
    <property type="protein sequence ID" value="AAY39920.1"/>
    <property type="molecule type" value="Genomic_DNA"/>
</dbReference>
<dbReference type="RefSeq" id="WP_002551458.1">
    <property type="nucleotide sequence ID" value="NC_007005.1"/>
</dbReference>
<dbReference type="RefSeq" id="YP_237958.1">
    <property type="nucleotide sequence ID" value="NC_007005.1"/>
</dbReference>
<dbReference type="SMR" id="Q4ZLQ2"/>
<dbReference type="STRING" id="205918.Psyr_4893"/>
<dbReference type="GeneID" id="77280740"/>
<dbReference type="KEGG" id="psb:Psyr_4893"/>
<dbReference type="PATRIC" id="fig|205918.7.peg.5058"/>
<dbReference type="eggNOG" id="COG0107">
    <property type="taxonomic scope" value="Bacteria"/>
</dbReference>
<dbReference type="HOGENOM" id="CLU_048577_4_0_6"/>
<dbReference type="OrthoDB" id="9781903at2"/>
<dbReference type="UniPathway" id="UPA00031">
    <property type="reaction ID" value="UER00010"/>
</dbReference>
<dbReference type="Proteomes" id="UP000000426">
    <property type="component" value="Chromosome"/>
</dbReference>
<dbReference type="GO" id="GO:0005737">
    <property type="term" value="C:cytoplasm"/>
    <property type="evidence" value="ECO:0007669"/>
    <property type="project" value="UniProtKB-SubCell"/>
</dbReference>
<dbReference type="GO" id="GO:0000107">
    <property type="term" value="F:imidazoleglycerol-phosphate synthase activity"/>
    <property type="evidence" value="ECO:0007669"/>
    <property type="project" value="UniProtKB-UniRule"/>
</dbReference>
<dbReference type="GO" id="GO:0016829">
    <property type="term" value="F:lyase activity"/>
    <property type="evidence" value="ECO:0007669"/>
    <property type="project" value="UniProtKB-KW"/>
</dbReference>
<dbReference type="GO" id="GO:0000105">
    <property type="term" value="P:L-histidine biosynthetic process"/>
    <property type="evidence" value="ECO:0007669"/>
    <property type="project" value="UniProtKB-UniRule"/>
</dbReference>
<dbReference type="CDD" id="cd04731">
    <property type="entry name" value="HisF"/>
    <property type="match status" value="1"/>
</dbReference>
<dbReference type="FunFam" id="3.20.20.70:FF:000006">
    <property type="entry name" value="Imidazole glycerol phosphate synthase subunit HisF"/>
    <property type="match status" value="1"/>
</dbReference>
<dbReference type="Gene3D" id="3.20.20.70">
    <property type="entry name" value="Aldolase class I"/>
    <property type="match status" value="1"/>
</dbReference>
<dbReference type="HAMAP" id="MF_01013">
    <property type="entry name" value="HisF"/>
    <property type="match status" value="1"/>
</dbReference>
<dbReference type="InterPro" id="IPR013785">
    <property type="entry name" value="Aldolase_TIM"/>
</dbReference>
<dbReference type="InterPro" id="IPR006062">
    <property type="entry name" value="His_biosynth"/>
</dbReference>
<dbReference type="InterPro" id="IPR004651">
    <property type="entry name" value="HisF"/>
</dbReference>
<dbReference type="InterPro" id="IPR050064">
    <property type="entry name" value="IGPS_HisA/HisF"/>
</dbReference>
<dbReference type="InterPro" id="IPR011060">
    <property type="entry name" value="RibuloseP-bd_barrel"/>
</dbReference>
<dbReference type="NCBIfam" id="TIGR00735">
    <property type="entry name" value="hisF"/>
    <property type="match status" value="1"/>
</dbReference>
<dbReference type="PANTHER" id="PTHR21235:SF2">
    <property type="entry name" value="IMIDAZOLE GLYCEROL PHOSPHATE SYNTHASE HISHF"/>
    <property type="match status" value="1"/>
</dbReference>
<dbReference type="PANTHER" id="PTHR21235">
    <property type="entry name" value="IMIDAZOLE GLYCEROL PHOSPHATE SYNTHASE SUBUNIT HISF/H IGP SYNTHASE SUBUNIT HISF/H"/>
    <property type="match status" value="1"/>
</dbReference>
<dbReference type="Pfam" id="PF00977">
    <property type="entry name" value="His_biosynth"/>
    <property type="match status" value="1"/>
</dbReference>
<dbReference type="SUPFAM" id="SSF51366">
    <property type="entry name" value="Ribulose-phoshate binding barrel"/>
    <property type="match status" value="1"/>
</dbReference>
<accession>Q4ZLQ2</accession>
<proteinExistence type="inferred from homology"/>
<organism>
    <name type="scientific">Pseudomonas syringae pv. syringae (strain B728a)</name>
    <dbReference type="NCBI Taxonomy" id="205918"/>
    <lineage>
        <taxon>Bacteria</taxon>
        <taxon>Pseudomonadati</taxon>
        <taxon>Pseudomonadota</taxon>
        <taxon>Gammaproteobacteria</taxon>
        <taxon>Pseudomonadales</taxon>
        <taxon>Pseudomonadaceae</taxon>
        <taxon>Pseudomonas</taxon>
        <taxon>Pseudomonas syringae</taxon>
    </lineage>
</organism>
<evidence type="ECO:0000255" key="1">
    <source>
        <dbReference type="HAMAP-Rule" id="MF_01013"/>
    </source>
</evidence>